<proteinExistence type="inferred from homology"/>
<dbReference type="EC" id="3.6.5.-" evidence="2"/>
<dbReference type="EMBL" id="AF252672">
    <property type="protein sequence ID" value="AAF68054.1"/>
    <property type="molecule type" value="Genomic_DNA"/>
</dbReference>
<dbReference type="EMBL" id="AF252673">
    <property type="protein sequence ID" value="AAF68055.1"/>
    <property type="molecule type" value="Genomic_DNA"/>
</dbReference>
<dbReference type="EMBL" id="AF252674">
    <property type="protein sequence ID" value="AAF68056.1"/>
    <property type="molecule type" value="Genomic_DNA"/>
</dbReference>
<dbReference type="EMBL" id="AF252675">
    <property type="protein sequence ID" value="AAF68057.1"/>
    <property type="molecule type" value="Genomic_DNA"/>
</dbReference>
<dbReference type="EMBL" id="AF252676">
    <property type="protein sequence ID" value="AAF68058.1"/>
    <property type="molecule type" value="Genomic_DNA"/>
</dbReference>
<dbReference type="EMBL" id="AF252677">
    <property type="protein sequence ID" value="AAF68059.1"/>
    <property type="molecule type" value="Genomic_DNA"/>
</dbReference>
<dbReference type="EMBL" id="AF252678">
    <property type="protein sequence ID" value="AAF68060.1"/>
    <property type="molecule type" value="Genomic_DNA"/>
</dbReference>
<dbReference type="EMBL" id="AF252679">
    <property type="protein sequence ID" value="AAF68061.1"/>
    <property type="molecule type" value="Genomic_DNA"/>
</dbReference>
<dbReference type="SMR" id="Q9N6P4"/>
<dbReference type="OrthoDB" id="9984778at2759"/>
<dbReference type="GO" id="GO:0005740">
    <property type="term" value="C:mitochondrial envelope"/>
    <property type="evidence" value="ECO:0000250"/>
    <property type="project" value="UniProtKB"/>
</dbReference>
<dbReference type="GO" id="GO:0005741">
    <property type="term" value="C:mitochondrial outer membrane"/>
    <property type="evidence" value="ECO:0007669"/>
    <property type="project" value="UniProtKB-SubCell"/>
</dbReference>
<dbReference type="GO" id="GO:0005525">
    <property type="term" value="F:GTP binding"/>
    <property type="evidence" value="ECO:0007669"/>
    <property type="project" value="UniProtKB-KW"/>
</dbReference>
<dbReference type="GO" id="GO:0003924">
    <property type="term" value="F:GTPase activity"/>
    <property type="evidence" value="ECO:0000250"/>
    <property type="project" value="UniProtKB"/>
</dbReference>
<dbReference type="GO" id="GO:0008053">
    <property type="term" value="P:mitochondrial fusion"/>
    <property type="evidence" value="ECO:0000250"/>
    <property type="project" value="UniProtKB"/>
</dbReference>
<dbReference type="GO" id="GO:0051646">
    <property type="term" value="P:mitochondrion localization"/>
    <property type="evidence" value="ECO:0007669"/>
    <property type="project" value="TreeGrafter"/>
</dbReference>
<dbReference type="GO" id="GO:0007287">
    <property type="term" value="P:Nebenkern assembly"/>
    <property type="evidence" value="ECO:0000250"/>
    <property type="project" value="UniProtKB"/>
</dbReference>
<dbReference type="GO" id="GO:0010636">
    <property type="term" value="P:positive regulation of mitochondrial fusion"/>
    <property type="evidence" value="ECO:0007669"/>
    <property type="project" value="EnsemblMetazoa"/>
</dbReference>
<dbReference type="GO" id="GO:0030382">
    <property type="term" value="P:sperm mitochondrion organization"/>
    <property type="evidence" value="ECO:0007669"/>
    <property type="project" value="EnsemblMetazoa"/>
</dbReference>
<dbReference type="InterPro" id="IPR006884">
    <property type="entry name" value="Fzo/mitofusin_HR2"/>
</dbReference>
<dbReference type="InterPro" id="IPR030381">
    <property type="entry name" value="G_DYNAMIN_dom"/>
</dbReference>
<dbReference type="InterPro" id="IPR027094">
    <property type="entry name" value="Mitofusin_fam"/>
</dbReference>
<dbReference type="PANTHER" id="PTHR10465">
    <property type="entry name" value="TRANSMEMBRANE GTPASE FZO1"/>
    <property type="match status" value="1"/>
</dbReference>
<dbReference type="PANTHER" id="PTHR10465:SF3">
    <property type="entry name" value="TRANSMEMBRANE GTPASE MARF-RELATED"/>
    <property type="match status" value="1"/>
</dbReference>
<dbReference type="Pfam" id="PF04799">
    <property type="entry name" value="Fzo_mitofusin"/>
    <property type="match status" value="1"/>
</dbReference>
<dbReference type="PROSITE" id="PS51718">
    <property type="entry name" value="G_DYNAMIN_2"/>
    <property type="match status" value="1"/>
</dbReference>
<protein>
    <recommendedName>
        <fullName>Transmembrane GTPase fzo</fullName>
        <ecNumber evidence="2">3.6.5.-</ecNumber>
    </recommendedName>
    <alternativeName>
        <fullName>Protein fuzzy onions</fullName>
    </alternativeName>
</protein>
<accession>Q9N6P4</accession>
<accession>Q9NGI3</accession>
<accession>Q9NGI4</accession>
<accession>Q9NGI5</accession>
<accession>Q9NGI6</accession>
<name>FZO_DROSI</name>
<evidence type="ECO:0000250" key="1">
    <source>
        <dbReference type="UniProtKB" id="O18412"/>
    </source>
</evidence>
<evidence type="ECO:0000250" key="2">
    <source>
        <dbReference type="UniProtKB" id="Q8IWA4"/>
    </source>
</evidence>
<evidence type="ECO:0000255" key="3"/>
<evidence type="ECO:0000255" key="4">
    <source>
        <dbReference type="PROSITE-ProRule" id="PRU01055"/>
    </source>
</evidence>
<feature type="chain" id="PRO_0000127681" description="Transmembrane GTPase fzo">
    <location>
        <begin position="1" status="less than"/>
        <end position="454" status="greater than"/>
    </location>
</feature>
<feature type="topological domain" description="Cytoplasmic" evidence="3">
    <location>
        <begin position="1" status="less than"/>
        <end position="322"/>
    </location>
</feature>
<feature type="transmembrane region" description="Helical; Name=1" evidence="3">
    <location>
        <begin position="323"/>
        <end position="335"/>
    </location>
</feature>
<feature type="topological domain" description="Mitochondrial intermembrane" evidence="3">
    <location>
        <begin position="336"/>
        <end position="338"/>
    </location>
</feature>
<feature type="transmembrane region" description="Helical; Name=2" evidence="3">
    <location>
        <begin position="339"/>
        <end position="361"/>
    </location>
</feature>
<feature type="topological domain" description="Cytoplasmic" evidence="3">
    <location>
        <begin position="362"/>
        <end position="454" status="greater than"/>
    </location>
</feature>
<feature type="domain" description="Dynamin-type G" evidence="4">
    <location>
        <begin position="1" status="less than"/>
        <end position="111"/>
    </location>
</feature>
<feature type="region of interest" description="G5 motif" evidence="4">
    <location>
        <begin position="30"/>
        <end position="33"/>
    </location>
</feature>
<feature type="coiled-coil region" evidence="3">
    <location>
        <begin position="112"/>
        <end position="162"/>
    </location>
</feature>
<feature type="coiled-coil region" evidence="3">
    <location>
        <begin position="411"/>
        <end position="434"/>
    </location>
</feature>
<feature type="binding site" evidence="2">
    <location>
        <position position="44"/>
    </location>
    <ligand>
        <name>GTP</name>
        <dbReference type="ChEBI" id="CHEBI:37565"/>
    </ligand>
</feature>
<feature type="sequence variant" description="In strain: Isolate SIM7.">
    <original>S</original>
    <variation>L</variation>
    <location>
        <position position="78"/>
    </location>
</feature>
<feature type="sequence variant" description="In strain: Isolate SIM1, Isolate SIM3 and Isolate SIM6.">
    <original>E</original>
    <variation>D</variation>
    <location>
        <position position="146"/>
    </location>
</feature>
<feature type="sequence variant" description="In strain: Isolate SIM3 and Isolate SIM6.">
    <original>Y</original>
    <variation>F</variation>
    <location>
        <position position="150"/>
    </location>
</feature>
<feature type="sequence variant" description="In strain: Isolate SIM3, Isolate SIM6 and Isolate SIM7.">
    <original>G</original>
    <variation>S</variation>
    <location>
        <position position="195"/>
    </location>
</feature>
<feature type="sequence variant" description="In strain: Isolate SIM3, Isolate SIM6 and Isolate SIM7.">
    <original>L</original>
    <variation>M</variation>
    <location>
        <position position="232"/>
    </location>
</feature>
<feature type="sequence variant" description="In strain: Isolate SIM3, Isolate SIM6 and Isolate SIM7.">
    <original>S</original>
    <variation>A</variation>
    <location>
        <position position="285"/>
    </location>
</feature>
<feature type="sequence variant" description="In strain: Isolate SIM7.">
    <original>P</original>
    <variation>L</variation>
    <location>
        <position position="304"/>
    </location>
</feature>
<feature type="sequence variant" description="In strain: Isolate SIM1, Isolate SIM3 and Isolate SIM6.">
    <original>M</original>
    <variation>I</variation>
    <location>
        <position position="355"/>
    </location>
</feature>
<feature type="non-terminal residue">
    <location>
        <position position="1"/>
    </location>
</feature>
<feature type="non-terminal residue">
    <location>
        <position position="454"/>
    </location>
</feature>
<reference key="1">
    <citation type="journal article" date="2000" name="Proc. Natl. Acad. Sci. U.S.A.">
        <title>Reduced X-linked nucleotide polymorphism in Drosophila simulans.</title>
        <authorList>
            <person name="Begun D.J."/>
            <person name="Whitley P."/>
        </authorList>
    </citation>
    <scope>NUCLEOTIDE SEQUENCE [GENOMIC DNA]</scope>
    <scope>VARIANTS</scope>
    <source>
        <strain>Isolate SIM1</strain>
        <strain>Isolate SIM2</strain>
        <strain>Isolate SIM3</strain>
        <strain>Isolate SIM4</strain>
        <strain>Isolate SIM5</strain>
        <strain>Isolate SIM6</strain>
        <strain>Isolate SIM7</strain>
        <strain>Isolate SIM8</strain>
    </source>
</reference>
<comment type="function">
    <text evidence="1">Essential transmembrane GTPase, which mediates mitochondrial fusion during spermatogenesis. In early spermatocytes, fusion of mitochondria give rise to two organelles named Nebenkern and constitutes an important step in mitochondria morphology, which is balanced between fusion and fission. Essential for fertility (By similarity).</text>
</comment>
<comment type="catalytic activity">
    <reaction evidence="2">
        <text>GTP + H2O = GDP + phosphate + H(+)</text>
        <dbReference type="Rhea" id="RHEA:19669"/>
        <dbReference type="ChEBI" id="CHEBI:15377"/>
        <dbReference type="ChEBI" id="CHEBI:15378"/>
        <dbReference type="ChEBI" id="CHEBI:37565"/>
        <dbReference type="ChEBI" id="CHEBI:43474"/>
        <dbReference type="ChEBI" id="CHEBI:58189"/>
    </reaction>
</comment>
<comment type="subcellular location">
    <subcellularLocation>
        <location evidence="1">Mitochondrion outer membrane</location>
        <topology evidence="1">Multi-pass membrane protein</topology>
    </subcellularLocation>
</comment>
<comment type="similarity">
    <text evidence="4">Belongs to the TRAFAC class dynamin-like GTPase superfamily. Dynamin/Fzo/YdjA family. Mitofusin subfamily.</text>
</comment>
<keyword id="KW-0175">Coiled coil</keyword>
<keyword id="KW-0217">Developmental protein</keyword>
<keyword id="KW-0221">Differentiation</keyword>
<keyword id="KW-0342">GTP-binding</keyword>
<keyword id="KW-0378">Hydrolase</keyword>
<keyword id="KW-0472">Membrane</keyword>
<keyword id="KW-0496">Mitochondrion</keyword>
<keyword id="KW-1000">Mitochondrion outer membrane</keyword>
<keyword id="KW-0547">Nucleotide-binding</keyword>
<keyword id="KW-0744">Spermatogenesis</keyword>
<keyword id="KW-0812">Transmembrane</keyword>
<keyword id="KW-1133">Transmembrane helix</keyword>
<organism>
    <name type="scientific">Drosophila simulans</name>
    <name type="common">Fruit fly</name>
    <dbReference type="NCBI Taxonomy" id="7240"/>
    <lineage>
        <taxon>Eukaryota</taxon>
        <taxon>Metazoa</taxon>
        <taxon>Ecdysozoa</taxon>
        <taxon>Arthropoda</taxon>
        <taxon>Hexapoda</taxon>
        <taxon>Insecta</taxon>
        <taxon>Pterygota</taxon>
        <taxon>Neoptera</taxon>
        <taxon>Endopterygota</taxon>
        <taxon>Diptera</taxon>
        <taxon>Brachycera</taxon>
        <taxon>Muscomorpha</taxon>
        <taxon>Ephydroidea</taxon>
        <taxon>Drosophilidae</taxon>
        <taxon>Drosophila</taxon>
        <taxon>Sophophora</taxon>
    </lineage>
</organism>
<sequence>SSMEPEMEQKVKDQHMERCVNLLVDELGVYSTAQEAWERIYHVSALEALHIRNGHIKNPSAQTKERYQEFLRFENDFSNCLAVSALKTKFGPHLLSAQKILNQLKSTLISPFIEKVSRLIDENKERRANLNAEIEEWELEMQDEREDLQYCFEELTEMTQRLGRCVLNDQIKTLIPSAVLSFSHPFHPEFPAQIGQYQRSLCAHLDNLLEDRVLQCLSIPLQRKILDMEKELGLQITEKSCDWQLIYGLDCQSYMSDFQPDLRFRFSLGFTALWHRLEGNLPLHSSPFRTQKLRNGHKKCLPLPPLVHGNHWQMLESLVKSKGSLGTVLLGAMAIRSFNWPIVMILGGLVGSFYMYEYAAWTTAAQERSFKSQYSRLLQQRLRTDVQQTVSGFELQLRQHLAKVRNCWEAQSNETLNDLNVRTAELTKQIQSMEVLQLSLKKFRDKGQLLASRL</sequence>
<gene>
    <name type="primary">fzo</name>
</gene>